<reference key="1">
    <citation type="submission" date="2007-11" db="EMBL/GenBank/DDBJ databases">
        <authorList>
            <consortium name="The Salmonella enterica serovar Arizonae Genome Sequencing Project"/>
            <person name="McClelland M."/>
            <person name="Sanderson E.K."/>
            <person name="Porwollik S."/>
            <person name="Spieth J."/>
            <person name="Clifton W.S."/>
            <person name="Fulton R."/>
            <person name="Chunyan W."/>
            <person name="Wollam A."/>
            <person name="Shah N."/>
            <person name="Pepin K."/>
            <person name="Bhonagiri V."/>
            <person name="Nash W."/>
            <person name="Johnson M."/>
            <person name="Thiruvilangam P."/>
            <person name="Wilson R."/>
        </authorList>
    </citation>
    <scope>NUCLEOTIDE SEQUENCE [LARGE SCALE GENOMIC DNA]</scope>
    <source>
        <strain>ATCC BAA-731 / CDC346-86 / RSK2980</strain>
    </source>
</reference>
<keyword id="KW-0056">Arginine metabolism</keyword>
<keyword id="KW-0963">Cytoplasm</keyword>
<keyword id="KW-0378">Hydrolase</keyword>
<keyword id="KW-1185">Reference proteome</keyword>
<name>ARCA_SALAR</name>
<sequence>MMEKHFVGSEIGQLRSVMLHRPNLSLKRLTPSNCQELLFDDVLSVERAGEEHDIFANTLRQQGVEVLLLTDLLTQTLDVPDAKTWLLDTQISDYRLGPTFAADIRAWLADMSHRELARHLSGGLTYGEIPASIKNMVVDTHDINDFIMKPLPNHLFTRDTSCWIYNGVSINPMAKPARQRETNNLRAIYRWHPQFADGDFIKYFGDENINYDHATLEGGDVLVIGRGAVLIGMSERTTPQGIEFLAQALFKHRQAERVIAVELPKHRSCMHLDTVMTHIDIDAFSVYPEVVRPDVQCWTLTPDGHGGLKRTQENTLVHALEKALGIDQVRLITTGGDAFEAEREQWNDANNVLTLRPGVVVGYERNIWTNEKYDKAGITVLPIPGDELGRGRGGARCMSCPLERDGI</sequence>
<evidence type="ECO:0000255" key="1">
    <source>
        <dbReference type="HAMAP-Rule" id="MF_00242"/>
    </source>
</evidence>
<feature type="chain" id="PRO_1000100743" description="Arginine deiminase">
    <location>
        <begin position="1"/>
        <end position="407"/>
    </location>
</feature>
<feature type="active site" description="Amidino-cysteine intermediate" evidence="1">
    <location>
        <position position="397"/>
    </location>
</feature>
<proteinExistence type="inferred from homology"/>
<gene>
    <name evidence="1" type="primary">arcA</name>
    <name type="ordered locus">SARI_03184</name>
</gene>
<protein>
    <recommendedName>
        <fullName evidence="1">Arginine deiminase</fullName>
        <shortName evidence="1">ADI</shortName>
        <ecNumber evidence="1">3.5.3.6</ecNumber>
    </recommendedName>
    <alternativeName>
        <fullName evidence="1">Arginine dihydrolase</fullName>
        <shortName evidence="1">AD</shortName>
    </alternativeName>
</protein>
<accession>A9MEV5</accession>
<organism>
    <name type="scientific">Salmonella arizonae (strain ATCC BAA-731 / CDC346-86 / RSK2980)</name>
    <dbReference type="NCBI Taxonomy" id="41514"/>
    <lineage>
        <taxon>Bacteria</taxon>
        <taxon>Pseudomonadati</taxon>
        <taxon>Pseudomonadota</taxon>
        <taxon>Gammaproteobacteria</taxon>
        <taxon>Enterobacterales</taxon>
        <taxon>Enterobacteriaceae</taxon>
        <taxon>Salmonella</taxon>
    </lineage>
</organism>
<dbReference type="EC" id="3.5.3.6" evidence="1"/>
<dbReference type="EMBL" id="CP000880">
    <property type="protein sequence ID" value="ABX23021.1"/>
    <property type="molecule type" value="Genomic_DNA"/>
</dbReference>
<dbReference type="SMR" id="A9MEV5"/>
<dbReference type="STRING" id="41514.SARI_03184"/>
<dbReference type="KEGG" id="ses:SARI_03184"/>
<dbReference type="HOGENOM" id="CLU_052662_0_0_6"/>
<dbReference type="UniPathway" id="UPA00254">
    <property type="reaction ID" value="UER00364"/>
</dbReference>
<dbReference type="Proteomes" id="UP000002084">
    <property type="component" value="Chromosome"/>
</dbReference>
<dbReference type="GO" id="GO:0005737">
    <property type="term" value="C:cytoplasm"/>
    <property type="evidence" value="ECO:0007669"/>
    <property type="project" value="UniProtKB-SubCell"/>
</dbReference>
<dbReference type="GO" id="GO:0016990">
    <property type="term" value="F:arginine deiminase activity"/>
    <property type="evidence" value="ECO:0007669"/>
    <property type="project" value="UniProtKB-UniRule"/>
</dbReference>
<dbReference type="GO" id="GO:0019547">
    <property type="term" value="P:arginine catabolic process to ornithine"/>
    <property type="evidence" value="ECO:0007669"/>
    <property type="project" value="UniProtKB-UniRule"/>
</dbReference>
<dbReference type="GO" id="GO:0019546">
    <property type="term" value="P:arginine deiminase pathway"/>
    <property type="evidence" value="ECO:0007669"/>
    <property type="project" value="TreeGrafter"/>
</dbReference>
<dbReference type="FunFam" id="1.10.3930.10:FF:000002">
    <property type="entry name" value="Arginine deiminase"/>
    <property type="match status" value="1"/>
</dbReference>
<dbReference type="Gene3D" id="1.10.3930.10">
    <property type="entry name" value="Arginine deiminase"/>
    <property type="match status" value="1"/>
</dbReference>
<dbReference type="Gene3D" id="3.75.10.10">
    <property type="entry name" value="L-arginine/glycine Amidinotransferase, Chain A"/>
    <property type="match status" value="1"/>
</dbReference>
<dbReference type="HAMAP" id="MF_00242">
    <property type="entry name" value="Arg_deiminase"/>
    <property type="match status" value="1"/>
</dbReference>
<dbReference type="InterPro" id="IPR003876">
    <property type="entry name" value="Arg_deiminase"/>
</dbReference>
<dbReference type="NCBIfam" id="TIGR01078">
    <property type="entry name" value="arcA"/>
    <property type="match status" value="1"/>
</dbReference>
<dbReference type="NCBIfam" id="NF002381">
    <property type="entry name" value="PRK01388.1"/>
    <property type="match status" value="1"/>
</dbReference>
<dbReference type="PANTHER" id="PTHR47271">
    <property type="entry name" value="ARGININE DEIMINASE"/>
    <property type="match status" value="1"/>
</dbReference>
<dbReference type="PANTHER" id="PTHR47271:SF2">
    <property type="entry name" value="ARGININE DEIMINASE"/>
    <property type="match status" value="1"/>
</dbReference>
<dbReference type="Pfam" id="PF02274">
    <property type="entry name" value="ADI"/>
    <property type="match status" value="1"/>
</dbReference>
<dbReference type="PIRSF" id="PIRSF006356">
    <property type="entry name" value="Arg_deiminase"/>
    <property type="match status" value="1"/>
</dbReference>
<dbReference type="PRINTS" id="PR01466">
    <property type="entry name" value="ARGDEIMINASE"/>
</dbReference>
<dbReference type="SUPFAM" id="SSF55909">
    <property type="entry name" value="Pentein"/>
    <property type="match status" value="1"/>
</dbReference>
<comment type="catalytic activity">
    <reaction evidence="1">
        <text>L-arginine + H2O = L-citrulline + NH4(+)</text>
        <dbReference type="Rhea" id="RHEA:19597"/>
        <dbReference type="ChEBI" id="CHEBI:15377"/>
        <dbReference type="ChEBI" id="CHEBI:28938"/>
        <dbReference type="ChEBI" id="CHEBI:32682"/>
        <dbReference type="ChEBI" id="CHEBI:57743"/>
        <dbReference type="EC" id="3.5.3.6"/>
    </reaction>
</comment>
<comment type="pathway">
    <text evidence="1">Amino-acid degradation; L-arginine degradation via ADI pathway; carbamoyl phosphate from L-arginine: step 1/2.</text>
</comment>
<comment type="subcellular location">
    <subcellularLocation>
        <location evidence="1">Cytoplasm</location>
    </subcellularLocation>
</comment>
<comment type="similarity">
    <text evidence="1">Belongs to the arginine deiminase family.</text>
</comment>